<organism>
    <name type="scientific">Rhizobium meliloti (strain 1021)</name>
    <name type="common">Ensifer meliloti</name>
    <name type="synonym">Sinorhizobium meliloti</name>
    <dbReference type="NCBI Taxonomy" id="266834"/>
    <lineage>
        <taxon>Bacteria</taxon>
        <taxon>Pseudomonadati</taxon>
        <taxon>Pseudomonadota</taxon>
        <taxon>Alphaproteobacteria</taxon>
        <taxon>Hyphomicrobiales</taxon>
        <taxon>Rhizobiaceae</taxon>
        <taxon>Sinorhizobium/Ensifer group</taxon>
        <taxon>Sinorhizobium</taxon>
    </lineage>
</organism>
<proteinExistence type="inferred from homology"/>
<reference key="1">
    <citation type="journal article" date="1998" name="J. Bacteriol.">
        <title>Succinoglycan production by Rhizobium meliloti is regulated through the ExoS-ChvI two-component regulatory system.</title>
        <authorList>
            <person name="Cheng H.-P."/>
            <person name="Walker G.C."/>
        </authorList>
    </citation>
    <scope>NUCLEOTIDE SEQUENCE [GENOMIC DNA]</scope>
    <source>
        <strain>1021</strain>
    </source>
</reference>
<reference key="2">
    <citation type="journal article" date="2001" name="Proc. Natl. Acad. Sci. U.S.A.">
        <title>Analysis of the chromosome sequence of the legume symbiont Sinorhizobium meliloti strain 1021.</title>
        <authorList>
            <person name="Capela D."/>
            <person name="Barloy-Hubler F."/>
            <person name="Gouzy J."/>
            <person name="Bothe G."/>
            <person name="Ampe F."/>
            <person name="Batut J."/>
            <person name="Boistard P."/>
            <person name="Becker A."/>
            <person name="Boutry M."/>
            <person name="Cadieu E."/>
            <person name="Dreano S."/>
            <person name="Gloux S."/>
            <person name="Godrie T."/>
            <person name="Goffeau A."/>
            <person name="Kahn D."/>
            <person name="Kiss E."/>
            <person name="Lelaure V."/>
            <person name="Masuy D."/>
            <person name="Pohl T."/>
            <person name="Portetelle D."/>
            <person name="Puehler A."/>
            <person name="Purnelle B."/>
            <person name="Ramsperger U."/>
            <person name="Renard C."/>
            <person name="Thebault P."/>
            <person name="Vandenbol M."/>
            <person name="Weidner S."/>
            <person name="Galibert F."/>
        </authorList>
    </citation>
    <scope>NUCLEOTIDE SEQUENCE [LARGE SCALE GENOMIC DNA]</scope>
    <source>
        <strain>1021</strain>
    </source>
</reference>
<reference key="3">
    <citation type="journal article" date="2001" name="Science">
        <title>The composite genome of the legume symbiont Sinorhizobium meliloti.</title>
        <authorList>
            <person name="Galibert F."/>
            <person name="Finan T.M."/>
            <person name="Long S.R."/>
            <person name="Puehler A."/>
            <person name="Abola P."/>
            <person name="Ampe F."/>
            <person name="Barloy-Hubler F."/>
            <person name="Barnett M.J."/>
            <person name="Becker A."/>
            <person name="Boistard P."/>
            <person name="Bothe G."/>
            <person name="Boutry M."/>
            <person name="Bowser L."/>
            <person name="Buhrmester J."/>
            <person name="Cadieu E."/>
            <person name="Capela D."/>
            <person name="Chain P."/>
            <person name="Cowie A."/>
            <person name="Davis R.W."/>
            <person name="Dreano S."/>
            <person name="Federspiel N.A."/>
            <person name="Fisher R.F."/>
            <person name="Gloux S."/>
            <person name="Godrie T."/>
            <person name="Goffeau A."/>
            <person name="Golding B."/>
            <person name="Gouzy J."/>
            <person name="Gurjal M."/>
            <person name="Hernandez-Lucas I."/>
            <person name="Hong A."/>
            <person name="Huizar L."/>
            <person name="Hyman R.W."/>
            <person name="Jones T."/>
            <person name="Kahn D."/>
            <person name="Kahn M.L."/>
            <person name="Kalman S."/>
            <person name="Keating D.H."/>
            <person name="Kiss E."/>
            <person name="Komp C."/>
            <person name="Lelaure V."/>
            <person name="Masuy D."/>
            <person name="Palm C."/>
            <person name="Peck M.C."/>
            <person name="Pohl T.M."/>
            <person name="Portetelle D."/>
            <person name="Purnelle B."/>
            <person name="Ramsperger U."/>
            <person name="Surzycki R."/>
            <person name="Thebault P."/>
            <person name="Vandenbol M."/>
            <person name="Vorhoelter F.J."/>
            <person name="Weidner S."/>
            <person name="Wells D.H."/>
            <person name="Wong K."/>
            <person name="Yeh K.-C."/>
            <person name="Batut J."/>
        </authorList>
    </citation>
    <scope>NUCLEOTIDE SEQUENCE [LARGE SCALE GENOMIC DNA]</scope>
    <source>
        <strain>1021</strain>
    </source>
</reference>
<reference key="4">
    <citation type="journal article" date="1995" name="J. Bacteriol.">
        <title>Identification of Rhizobium-specific intergenic mosaic elements within an essential two-component regulatory system of Rhizobium species.</title>
        <authorList>
            <person name="Oesteraas M."/>
            <person name="Stanley J."/>
            <person name="Finan T.M."/>
        </authorList>
    </citation>
    <scope>NUCLEOTIDE SEQUENCE [GENOMIC DNA] OF 1-112</scope>
    <source>
        <strain>SU47 / 1021</strain>
    </source>
</reference>
<sequence>MRGQRRWAHPFTLIRRLFGNAVFSSLTRRIVFFNLVALVVLVGGIMYLNQFREGLIDARVESLLTQGEIIAGAISASASVDTNSITIDPEKLLELQAGESITPLPSDEDLEFPIIQERVAPVLRRLISPTRTRARLFDADADLLLDSRHLYSGGQVLRFDLPPVDPESPSLADEFGTWFNRLLQPGDLPLYKEPPGGNGSIYPEVMNALTGVRGAVVRVTEKGELIVSVAVPVQRFRAVLGVLLLSTQAGDIDKIVHAERLAIIRVFGVAALVNVILSLLLSSTIANPLRRLSAAAIRVRRGGAKEREEIPDFSSRQDEIGNLSVALREMTTALYDRIAAIENFAADVSHELKNPLTSLRSAVETLPLARNEESKKRLMDVIQHDVRRLDRLISDISDASRLDAELARADAKKVDLEKLLGDLVEISRQIRGSKKPVLLDFVVDRKDNPRASFIVSGYELRIGQIITNLIENARSFVPEQNGRIVVRLTRSRLRCIVYVEDNGPGIQAEDIDRIFERFYTDRPEGEDFGQNSGLGLSISRQIAEAHGGTLRAENIAGKDGRISGARFVLSLPAGPHP</sequence>
<comment type="function">
    <text>Member of a two-component regulatory system ChvG(ExoS)/ChvI involved in regulating the production of succinoglycan. Activates ChvI by phosphorylation.</text>
</comment>
<comment type="catalytic activity">
    <reaction>
        <text>ATP + protein L-histidine = ADP + protein N-phospho-L-histidine.</text>
        <dbReference type="EC" id="2.7.13.3"/>
    </reaction>
</comment>
<comment type="pathway">
    <text>Glycan metabolism; exopolysaccharide biosynthesis.</text>
</comment>
<comment type="subunit">
    <text>Homodimer.</text>
</comment>
<comment type="subcellular location">
    <subcellularLocation>
        <location>Cell inner membrane</location>
        <topology>Multi-pass membrane protein</topology>
    </subcellularLocation>
</comment>
<comment type="sequence caution" evidence="5">
    <conflict type="erroneous initiation">
        <sequence resource="EMBL-CDS" id="CAC41430"/>
    </conflict>
</comment>
<accession>P72292</accession>
<accession>O31069</accession>
<dbReference type="EC" id="2.7.13.3"/>
<dbReference type="EMBL" id="AF027298">
    <property type="protein sequence ID" value="AAB96631.1"/>
    <property type="molecule type" value="Genomic_DNA"/>
</dbReference>
<dbReference type="EMBL" id="AL591688">
    <property type="protein sequence ID" value="CAC41430.1"/>
    <property type="status" value="ALT_INIT"/>
    <property type="molecule type" value="Genomic_DNA"/>
</dbReference>
<dbReference type="EMBL" id="U32941">
    <property type="protein sequence ID" value="AAB07686.2"/>
    <property type="molecule type" value="Genomic_DNA"/>
</dbReference>
<dbReference type="RefSeq" id="NP_384149.1">
    <property type="nucleotide sequence ID" value="NC_003047.1"/>
</dbReference>
<dbReference type="SMR" id="P72292"/>
<dbReference type="EnsemblBacteria" id="CAC41430">
    <property type="protein sequence ID" value="CAC41430"/>
    <property type="gene ID" value="SMc04446"/>
</dbReference>
<dbReference type="KEGG" id="sme:SMc04446"/>
<dbReference type="PATRIC" id="fig|266834.11.peg.1397"/>
<dbReference type="eggNOG" id="COG2205">
    <property type="taxonomic scope" value="Bacteria"/>
</dbReference>
<dbReference type="HOGENOM" id="CLU_000445_89_6_5"/>
<dbReference type="OrthoDB" id="9805942at2"/>
<dbReference type="BRENDA" id="2.7.13.3">
    <property type="organism ID" value="5347"/>
</dbReference>
<dbReference type="UniPathway" id="UPA00631"/>
<dbReference type="PRO" id="PR:P72292"/>
<dbReference type="Proteomes" id="UP000001976">
    <property type="component" value="Chromosome"/>
</dbReference>
<dbReference type="GO" id="GO:0005886">
    <property type="term" value="C:plasma membrane"/>
    <property type="evidence" value="ECO:0007669"/>
    <property type="project" value="UniProtKB-SubCell"/>
</dbReference>
<dbReference type="GO" id="GO:0005524">
    <property type="term" value="F:ATP binding"/>
    <property type="evidence" value="ECO:0007669"/>
    <property type="project" value="UniProtKB-KW"/>
</dbReference>
<dbReference type="GO" id="GO:0000155">
    <property type="term" value="F:phosphorelay sensor kinase activity"/>
    <property type="evidence" value="ECO:0007669"/>
    <property type="project" value="InterPro"/>
</dbReference>
<dbReference type="GO" id="GO:0000271">
    <property type="term" value="P:polysaccharide biosynthetic process"/>
    <property type="evidence" value="ECO:0007669"/>
    <property type="project" value="UniProtKB-KW"/>
</dbReference>
<dbReference type="CDD" id="cd06225">
    <property type="entry name" value="HAMP"/>
    <property type="match status" value="1"/>
</dbReference>
<dbReference type="CDD" id="cd00082">
    <property type="entry name" value="HisKA"/>
    <property type="match status" value="1"/>
</dbReference>
<dbReference type="Gene3D" id="1.10.287.130">
    <property type="match status" value="1"/>
</dbReference>
<dbReference type="Gene3D" id="6.10.340.10">
    <property type="match status" value="1"/>
</dbReference>
<dbReference type="Gene3D" id="3.30.565.10">
    <property type="entry name" value="Histidine kinase-like ATPase, C-terminal domain"/>
    <property type="match status" value="1"/>
</dbReference>
<dbReference type="InterPro" id="IPR003660">
    <property type="entry name" value="HAMP_dom"/>
</dbReference>
<dbReference type="InterPro" id="IPR036890">
    <property type="entry name" value="HATPase_C_sf"/>
</dbReference>
<dbReference type="InterPro" id="IPR005467">
    <property type="entry name" value="His_kinase_dom"/>
</dbReference>
<dbReference type="InterPro" id="IPR003661">
    <property type="entry name" value="HisK_dim/P_dom"/>
</dbReference>
<dbReference type="InterPro" id="IPR036097">
    <property type="entry name" value="HisK_dim/P_sf"/>
</dbReference>
<dbReference type="InterPro" id="IPR025908">
    <property type="entry name" value="Sensor_TM1"/>
</dbReference>
<dbReference type="InterPro" id="IPR004358">
    <property type="entry name" value="Sig_transdc_His_kin-like_C"/>
</dbReference>
<dbReference type="InterPro" id="IPR025919">
    <property type="entry name" value="Stimulus_sens_dom"/>
</dbReference>
<dbReference type="InterPro" id="IPR050428">
    <property type="entry name" value="TCS_sensor_his_kinase"/>
</dbReference>
<dbReference type="PANTHER" id="PTHR45436:SF5">
    <property type="entry name" value="SENSOR HISTIDINE KINASE TRCS"/>
    <property type="match status" value="1"/>
</dbReference>
<dbReference type="PANTHER" id="PTHR45436">
    <property type="entry name" value="SENSOR HISTIDINE KINASE YKOH"/>
    <property type="match status" value="1"/>
</dbReference>
<dbReference type="Pfam" id="PF00672">
    <property type="entry name" value="HAMP"/>
    <property type="match status" value="1"/>
</dbReference>
<dbReference type="Pfam" id="PF02518">
    <property type="entry name" value="HATPase_c"/>
    <property type="match status" value="1"/>
</dbReference>
<dbReference type="Pfam" id="PF00512">
    <property type="entry name" value="HisKA"/>
    <property type="match status" value="1"/>
</dbReference>
<dbReference type="Pfam" id="PF13755">
    <property type="entry name" value="Sensor_TM1"/>
    <property type="match status" value="1"/>
</dbReference>
<dbReference type="Pfam" id="PF13756">
    <property type="entry name" value="Stimulus_sens_1"/>
    <property type="match status" value="1"/>
</dbReference>
<dbReference type="PRINTS" id="PR00344">
    <property type="entry name" value="BCTRLSENSOR"/>
</dbReference>
<dbReference type="SMART" id="SM00304">
    <property type="entry name" value="HAMP"/>
    <property type="match status" value="1"/>
</dbReference>
<dbReference type="SMART" id="SM00387">
    <property type="entry name" value="HATPase_c"/>
    <property type="match status" value="1"/>
</dbReference>
<dbReference type="SMART" id="SM00388">
    <property type="entry name" value="HisKA"/>
    <property type="match status" value="1"/>
</dbReference>
<dbReference type="SUPFAM" id="SSF55874">
    <property type="entry name" value="ATPase domain of HSP90 chaperone/DNA topoisomerase II/histidine kinase"/>
    <property type="match status" value="1"/>
</dbReference>
<dbReference type="SUPFAM" id="SSF47384">
    <property type="entry name" value="Homodimeric domain of signal transducing histidine kinase"/>
    <property type="match status" value="1"/>
</dbReference>
<dbReference type="PROSITE" id="PS50885">
    <property type="entry name" value="HAMP"/>
    <property type="match status" value="1"/>
</dbReference>
<dbReference type="PROSITE" id="PS50109">
    <property type="entry name" value="HIS_KIN"/>
    <property type="match status" value="1"/>
</dbReference>
<evidence type="ECO:0000250" key="1"/>
<evidence type="ECO:0000255" key="2"/>
<evidence type="ECO:0000255" key="3">
    <source>
        <dbReference type="PROSITE-ProRule" id="PRU00102"/>
    </source>
</evidence>
<evidence type="ECO:0000255" key="4">
    <source>
        <dbReference type="PROSITE-ProRule" id="PRU00107"/>
    </source>
</evidence>
<evidence type="ECO:0000305" key="5"/>
<protein>
    <recommendedName>
        <fullName>Sensor protein ChvG</fullName>
        <ecNumber>2.7.13.3</ecNumber>
    </recommendedName>
    <alternativeName>
        <fullName>Histidine kinase sensory protein ExoS</fullName>
    </alternativeName>
</protein>
<gene>
    <name type="primary">chvG</name>
    <name type="synonym">exoS</name>
    <name type="ordered locus">R00043</name>
    <name type="ORF">SMc04446</name>
</gene>
<keyword id="KW-0067">ATP-binding</keyword>
<keyword id="KW-0997">Cell inner membrane</keyword>
<keyword id="KW-1003">Cell membrane</keyword>
<keyword id="KW-0270">Exopolysaccharide synthesis</keyword>
<keyword id="KW-0418">Kinase</keyword>
<keyword id="KW-0472">Membrane</keyword>
<keyword id="KW-0547">Nucleotide-binding</keyword>
<keyword id="KW-0597">Phosphoprotein</keyword>
<keyword id="KW-1185">Reference proteome</keyword>
<keyword id="KW-0808">Transferase</keyword>
<keyword id="KW-0812">Transmembrane</keyword>
<keyword id="KW-1133">Transmembrane helix</keyword>
<keyword id="KW-0902">Two-component regulatory system</keyword>
<feature type="chain" id="PRO_0000074721" description="Sensor protein ChvG">
    <location>
        <begin position="1"/>
        <end position="577"/>
    </location>
</feature>
<feature type="topological domain" description="Cytoplasmic" evidence="2">
    <location>
        <begin position="1"/>
        <end position="29"/>
    </location>
</feature>
<feature type="transmembrane region" description="Helical" evidence="2">
    <location>
        <begin position="30"/>
        <end position="50"/>
    </location>
</feature>
<feature type="topological domain" description="Periplasmic" evidence="2">
    <location>
        <begin position="51"/>
        <end position="260"/>
    </location>
</feature>
<feature type="transmembrane region" description="Helical" evidence="2">
    <location>
        <begin position="261"/>
        <end position="281"/>
    </location>
</feature>
<feature type="topological domain" description="Cytoplasmic" evidence="2">
    <location>
        <begin position="282"/>
        <end position="577"/>
    </location>
</feature>
<feature type="domain" description="HAMP" evidence="3">
    <location>
        <begin position="283"/>
        <end position="339"/>
    </location>
</feature>
<feature type="domain" description="Histidine kinase" evidence="4">
    <location>
        <begin position="347"/>
        <end position="575"/>
    </location>
</feature>
<feature type="modified residue" description="Phosphohistidine" evidence="1">
    <location>
        <position position="350"/>
    </location>
</feature>
<feature type="sequence conflict" description="In Ref. 1; AAB96631." evidence="5" ref="1">
    <original>L</original>
    <variation>F</variation>
    <location>
        <position position="136"/>
    </location>
</feature>
<feature type="sequence conflict" description="In Ref. 1; AAB96631." evidence="5" ref="1">
    <original>V</original>
    <variation>A</variation>
    <location>
        <position position="266"/>
    </location>
</feature>
<name>CHVG_RHIME</name>